<feature type="chain" id="PRO_1000145870" description="NADH-quinone oxidoreductase subunit N">
    <location>
        <begin position="1"/>
        <end position="485"/>
    </location>
</feature>
<feature type="transmembrane region" description="Helical" evidence="1">
    <location>
        <begin position="8"/>
        <end position="28"/>
    </location>
</feature>
<feature type="transmembrane region" description="Helical" evidence="1">
    <location>
        <begin position="35"/>
        <end position="55"/>
    </location>
</feature>
<feature type="transmembrane region" description="Helical" evidence="1">
    <location>
        <begin position="71"/>
        <end position="91"/>
    </location>
</feature>
<feature type="transmembrane region" description="Helical" evidence="1">
    <location>
        <begin position="105"/>
        <end position="125"/>
    </location>
</feature>
<feature type="transmembrane region" description="Helical" evidence="1">
    <location>
        <begin position="127"/>
        <end position="147"/>
    </location>
</feature>
<feature type="transmembrane region" description="Helical" evidence="1">
    <location>
        <begin position="159"/>
        <end position="179"/>
    </location>
</feature>
<feature type="transmembrane region" description="Helical" evidence="1">
    <location>
        <begin position="203"/>
        <end position="223"/>
    </location>
</feature>
<feature type="transmembrane region" description="Helical" evidence="1">
    <location>
        <begin position="235"/>
        <end position="255"/>
    </location>
</feature>
<feature type="transmembrane region" description="Helical" evidence="1">
    <location>
        <begin position="271"/>
        <end position="291"/>
    </location>
</feature>
<feature type="transmembrane region" description="Helical" evidence="1">
    <location>
        <begin position="297"/>
        <end position="317"/>
    </location>
</feature>
<feature type="transmembrane region" description="Helical" evidence="1">
    <location>
        <begin position="326"/>
        <end position="346"/>
    </location>
</feature>
<feature type="transmembrane region" description="Helical" evidence="1">
    <location>
        <begin position="373"/>
        <end position="393"/>
    </location>
</feature>
<feature type="transmembrane region" description="Helical" evidence="1">
    <location>
        <begin position="408"/>
        <end position="430"/>
    </location>
</feature>
<feature type="transmembrane region" description="Helical" evidence="1">
    <location>
        <begin position="455"/>
        <end position="475"/>
    </location>
</feature>
<keyword id="KW-0997">Cell inner membrane</keyword>
<keyword id="KW-1003">Cell membrane</keyword>
<keyword id="KW-0472">Membrane</keyword>
<keyword id="KW-0520">NAD</keyword>
<keyword id="KW-0874">Quinone</keyword>
<keyword id="KW-1278">Translocase</keyword>
<keyword id="KW-0812">Transmembrane</keyword>
<keyword id="KW-1133">Transmembrane helix</keyword>
<keyword id="KW-0813">Transport</keyword>
<keyword id="KW-0830">Ubiquinone</keyword>
<accession>B1LLM9</accession>
<organism>
    <name type="scientific">Escherichia coli (strain SMS-3-5 / SECEC)</name>
    <dbReference type="NCBI Taxonomy" id="439855"/>
    <lineage>
        <taxon>Bacteria</taxon>
        <taxon>Pseudomonadati</taxon>
        <taxon>Pseudomonadota</taxon>
        <taxon>Gammaproteobacteria</taxon>
        <taxon>Enterobacterales</taxon>
        <taxon>Enterobacteriaceae</taxon>
        <taxon>Escherichia</taxon>
    </lineage>
</organism>
<evidence type="ECO:0000255" key="1">
    <source>
        <dbReference type="HAMAP-Rule" id="MF_00445"/>
    </source>
</evidence>
<protein>
    <recommendedName>
        <fullName evidence="1">NADH-quinone oxidoreductase subunit N</fullName>
        <ecNumber evidence="1">7.1.1.-</ecNumber>
    </recommendedName>
    <alternativeName>
        <fullName evidence="1">NADH dehydrogenase I subunit N</fullName>
    </alternativeName>
    <alternativeName>
        <fullName evidence="1">NDH-1 subunit N</fullName>
    </alternativeName>
</protein>
<dbReference type="EC" id="7.1.1.-" evidence="1"/>
<dbReference type="EMBL" id="CP000970">
    <property type="protein sequence ID" value="ACB19260.1"/>
    <property type="molecule type" value="Genomic_DNA"/>
</dbReference>
<dbReference type="RefSeq" id="WP_000156701.1">
    <property type="nucleotide sequence ID" value="NC_010498.1"/>
</dbReference>
<dbReference type="SMR" id="B1LLM9"/>
<dbReference type="GeneID" id="75205678"/>
<dbReference type="KEGG" id="ecm:EcSMS35_2430"/>
<dbReference type="HOGENOM" id="CLU_007100_1_5_6"/>
<dbReference type="Proteomes" id="UP000007011">
    <property type="component" value="Chromosome"/>
</dbReference>
<dbReference type="GO" id="GO:0005886">
    <property type="term" value="C:plasma membrane"/>
    <property type="evidence" value="ECO:0007669"/>
    <property type="project" value="UniProtKB-SubCell"/>
</dbReference>
<dbReference type="GO" id="GO:0008137">
    <property type="term" value="F:NADH dehydrogenase (ubiquinone) activity"/>
    <property type="evidence" value="ECO:0007669"/>
    <property type="project" value="InterPro"/>
</dbReference>
<dbReference type="GO" id="GO:0050136">
    <property type="term" value="F:NADH:ubiquinone reductase (non-electrogenic) activity"/>
    <property type="evidence" value="ECO:0007669"/>
    <property type="project" value="UniProtKB-UniRule"/>
</dbReference>
<dbReference type="GO" id="GO:0048038">
    <property type="term" value="F:quinone binding"/>
    <property type="evidence" value="ECO:0007669"/>
    <property type="project" value="UniProtKB-KW"/>
</dbReference>
<dbReference type="GO" id="GO:0042773">
    <property type="term" value="P:ATP synthesis coupled electron transport"/>
    <property type="evidence" value="ECO:0007669"/>
    <property type="project" value="InterPro"/>
</dbReference>
<dbReference type="HAMAP" id="MF_00445">
    <property type="entry name" value="NDH1_NuoN_1"/>
    <property type="match status" value="1"/>
</dbReference>
<dbReference type="InterPro" id="IPR010096">
    <property type="entry name" value="NADH-Q_OxRdtase_suN/2"/>
</dbReference>
<dbReference type="InterPro" id="IPR001750">
    <property type="entry name" value="ND/Mrp_TM"/>
</dbReference>
<dbReference type="NCBIfam" id="TIGR01770">
    <property type="entry name" value="NDH_I_N"/>
    <property type="match status" value="1"/>
</dbReference>
<dbReference type="NCBIfam" id="NF004439">
    <property type="entry name" value="PRK05777.1-1"/>
    <property type="match status" value="1"/>
</dbReference>
<dbReference type="PANTHER" id="PTHR22773">
    <property type="entry name" value="NADH DEHYDROGENASE"/>
    <property type="match status" value="1"/>
</dbReference>
<dbReference type="Pfam" id="PF00361">
    <property type="entry name" value="Proton_antipo_M"/>
    <property type="match status" value="1"/>
</dbReference>
<proteinExistence type="inferred from homology"/>
<reference key="1">
    <citation type="journal article" date="2008" name="J. Bacteriol.">
        <title>Insights into the environmental resistance gene pool from the genome sequence of the multidrug-resistant environmental isolate Escherichia coli SMS-3-5.</title>
        <authorList>
            <person name="Fricke W.F."/>
            <person name="Wright M.S."/>
            <person name="Lindell A.H."/>
            <person name="Harkins D.M."/>
            <person name="Baker-Austin C."/>
            <person name="Ravel J."/>
            <person name="Stepanauskas R."/>
        </authorList>
    </citation>
    <scope>NUCLEOTIDE SEQUENCE [LARGE SCALE GENOMIC DNA]</scope>
    <source>
        <strain>SMS-3-5 / SECEC</strain>
    </source>
</reference>
<gene>
    <name evidence="1" type="primary">nuoN</name>
    <name type="ordered locus">EcSMS35_2430</name>
</gene>
<comment type="function">
    <text evidence="1">NDH-1 shuttles electrons from NADH, via FMN and iron-sulfur (Fe-S) centers, to quinones in the respiratory chain. The immediate electron acceptor for the enzyme in this species is believed to be ubiquinone. Couples the redox reaction to proton translocation (for every two electrons transferred, four hydrogen ions are translocated across the cytoplasmic membrane), and thus conserves the redox energy in a proton gradient.</text>
</comment>
<comment type="catalytic activity">
    <reaction evidence="1">
        <text>a quinone + NADH + 5 H(+)(in) = a quinol + NAD(+) + 4 H(+)(out)</text>
        <dbReference type="Rhea" id="RHEA:57888"/>
        <dbReference type="ChEBI" id="CHEBI:15378"/>
        <dbReference type="ChEBI" id="CHEBI:24646"/>
        <dbReference type="ChEBI" id="CHEBI:57540"/>
        <dbReference type="ChEBI" id="CHEBI:57945"/>
        <dbReference type="ChEBI" id="CHEBI:132124"/>
    </reaction>
</comment>
<comment type="subunit">
    <text evidence="1">NDH-1 is composed of 13 different subunits. Subunits NuoA, H, J, K, L, M, N constitute the membrane sector of the complex.</text>
</comment>
<comment type="subcellular location">
    <subcellularLocation>
        <location evidence="1">Cell inner membrane</location>
        <topology evidence="1">Multi-pass membrane protein</topology>
    </subcellularLocation>
</comment>
<comment type="similarity">
    <text evidence="1">Belongs to the complex I subunit 2 family.</text>
</comment>
<name>NUON_ECOSM</name>
<sequence>MTITPQNLIALLPLLIVGLTVVVVMLSIAWRRNHFLNATLSVIGLNAALVSLWFVGQAGAMDVTPLMRVDGFAMLYTGLVLLASLATCTFAYPWLEGYNDNKDEFYLLVLIAALGGILLANANHLASLFLGIELISLPLFGLVGYAFRQKRSLEASIKYTILSAAASSFLLFGMALVYAQSGDLSFVALGKNLGDGMLNEPLLLAGFGLMIVGLGFKLSLVPFHLWTPDVYQGAPAPVSTFLATASKIAIFGVVMRLFLYAPVGDSEAIRVVLAIIAFASIIFGNLMALSQTNIKRLLGYSSISHLGYLLVALIALQTGEMSMEAVGVYLAGYLFSSLGAFGVVSLMSSPYRGPDADSLFSYRGLFWHRPILAAVMTVMMLSLAGIPMTLGFIGKFYVLAVGVQAHLWWLVGAVVVGSAIGLYYYLRVAVSLYLHAPEQPGRDAPSNWQYSAGGIVVLISALLVLVLGVWPQPLISIVRLAMPLM</sequence>